<gene>
    <name evidence="1" type="primary">rpmG2</name>
    <name type="ordered locus">SH1572</name>
</gene>
<comment type="similarity">
    <text evidence="1">Belongs to the bacterial ribosomal protein bL33 family.</text>
</comment>
<evidence type="ECO:0000255" key="1">
    <source>
        <dbReference type="HAMAP-Rule" id="MF_00294"/>
    </source>
</evidence>
<reference key="1">
    <citation type="journal article" date="2005" name="J. Bacteriol.">
        <title>Whole-genome sequencing of Staphylococcus haemolyticus uncovers the extreme plasticity of its genome and the evolution of human-colonizing staphylococcal species.</title>
        <authorList>
            <person name="Takeuchi F."/>
            <person name="Watanabe S."/>
            <person name="Baba T."/>
            <person name="Yuzawa H."/>
            <person name="Ito T."/>
            <person name="Morimoto Y."/>
            <person name="Kuroda M."/>
            <person name="Cui L."/>
            <person name="Takahashi M."/>
            <person name="Ankai A."/>
            <person name="Baba S."/>
            <person name="Fukui S."/>
            <person name="Lee J.C."/>
            <person name="Hiramatsu K."/>
        </authorList>
    </citation>
    <scope>NUCLEOTIDE SEQUENCE [LARGE SCALE GENOMIC DNA]</scope>
    <source>
        <strain>JCSC1435</strain>
    </source>
</reference>
<sequence>MRVNVTLACTECGDRNYITTKNKRNNPERIEMKKYCPRLNKYTLHRETK</sequence>
<protein>
    <recommendedName>
        <fullName evidence="1">Large ribosomal subunit protein bL33B</fullName>
    </recommendedName>
    <alternativeName>
        <fullName evidence="1">50S ribosomal protein L33 2</fullName>
    </alternativeName>
</protein>
<feature type="chain" id="PRO_0000356698" description="Large ribosomal subunit protein bL33B">
    <location>
        <begin position="1"/>
        <end position="49"/>
    </location>
</feature>
<keyword id="KW-0687">Ribonucleoprotein</keyword>
<keyword id="KW-0689">Ribosomal protein</keyword>
<organism>
    <name type="scientific">Staphylococcus haemolyticus (strain JCSC1435)</name>
    <dbReference type="NCBI Taxonomy" id="279808"/>
    <lineage>
        <taxon>Bacteria</taxon>
        <taxon>Bacillati</taxon>
        <taxon>Bacillota</taxon>
        <taxon>Bacilli</taxon>
        <taxon>Bacillales</taxon>
        <taxon>Staphylococcaceae</taxon>
        <taxon>Staphylococcus</taxon>
    </lineage>
</organism>
<name>RL332_STAHJ</name>
<dbReference type="EMBL" id="AP006716">
    <property type="protein sequence ID" value="BAE04881.1"/>
    <property type="molecule type" value="Genomic_DNA"/>
</dbReference>
<dbReference type="SMR" id="Q4L644"/>
<dbReference type="KEGG" id="sha:SH1572"/>
<dbReference type="eggNOG" id="COG0267">
    <property type="taxonomic scope" value="Bacteria"/>
</dbReference>
<dbReference type="HOGENOM" id="CLU_190949_0_2_9"/>
<dbReference type="OrthoDB" id="197660at2"/>
<dbReference type="Proteomes" id="UP000000543">
    <property type="component" value="Chromosome"/>
</dbReference>
<dbReference type="GO" id="GO:0005737">
    <property type="term" value="C:cytoplasm"/>
    <property type="evidence" value="ECO:0007669"/>
    <property type="project" value="UniProtKB-ARBA"/>
</dbReference>
<dbReference type="GO" id="GO:1990904">
    <property type="term" value="C:ribonucleoprotein complex"/>
    <property type="evidence" value="ECO:0007669"/>
    <property type="project" value="UniProtKB-KW"/>
</dbReference>
<dbReference type="GO" id="GO:0005840">
    <property type="term" value="C:ribosome"/>
    <property type="evidence" value="ECO:0007669"/>
    <property type="project" value="UniProtKB-KW"/>
</dbReference>
<dbReference type="GO" id="GO:0003735">
    <property type="term" value="F:structural constituent of ribosome"/>
    <property type="evidence" value="ECO:0007669"/>
    <property type="project" value="InterPro"/>
</dbReference>
<dbReference type="GO" id="GO:0006412">
    <property type="term" value="P:translation"/>
    <property type="evidence" value="ECO:0007669"/>
    <property type="project" value="UniProtKB-UniRule"/>
</dbReference>
<dbReference type="Gene3D" id="2.20.28.120">
    <property type="entry name" value="Ribosomal protein L33"/>
    <property type="match status" value="1"/>
</dbReference>
<dbReference type="HAMAP" id="MF_00294">
    <property type="entry name" value="Ribosomal_bL33"/>
    <property type="match status" value="1"/>
</dbReference>
<dbReference type="InterPro" id="IPR001705">
    <property type="entry name" value="Ribosomal_bL33"/>
</dbReference>
<dbReference type="InterPro" id="IPR018264">
    <property type="entry name" value="Ribosomal_bL33_CS"/>
</dbReference>
<dbReference type="InterPro" id="IPR038584">
    <property type="entry name" value="Ribosomal_bL33_sf"/>
</dbReference>
<dbReference type="InterPro" id="IPR011332">
    <property type="entry name" value="Ribosomal_zn-bd"/>
</dbReference>
<dbReference type="NCBIfam" id="NF001764">
    <property type="entry name" value="PRK00504.1"/>
    <property type="match status" value="1"/>
</dbReference>
<dbReference type="NCBIfam" id="NF001860">
    <property type="entry name" value="PRK00595.1"/>
    <property type="match status" value="1"/>
</dbReference>
<dbReference type="NCBIfam" id="TIGR01023">
    <property type="entry name" value="rpmG_bact"/>
    <property type="match status" value="1"/>
</dbReference>
<dbReference type="PANTHER" id="PTHR43168">
    <property type="entry name" value="50S RIBOSOMAL PROTEIN L33, CHLOROPLASTIC"/>
    <property type="match status" value="1"/>
</dbReference>
<dbReference type="PANTHER" id="PTHR43168:SF2">
    <property type="entry name" value="LARGE RIBOSOMAL SUBUNIT PROTEIN BL33C"/>
    <property type="match status" value="1"/>
</dbReference>
<dbReference type="Pfam" id="PF00471">
    <property type="entry name" value="Ribosomal_L33"/>
    <property type="match status" value="1"/>
</dbReference>
<dbReference type="SUPFAM" id="SSF57829">
    <property type="entry name" value="Zn-binding ribosomal proteins"/>
    <property type="match status" value="1"/>
</dbReference>
<dbReference type="PROSITE" id="PS00582">
    <property type="entry name" value="RIBOSOMAL_L33"/>
    <property type="match status" value="1"/>
</dbReference>
<proteinExistence type="inferred from homology"/>
<accession>Q4L644</accession>